<protein>
    <recommendedName>
        <fullName evidence="7">Dual-specificity RNA pseudouridine synthase RluF</fullName>
        <ecNumber evidence="6">5.4.99.-</ecNumber>
        <ecNumber evidence="3 5 6">5.4.99.21</ecNumber>
    </recommendedName>
    <alternativeName>
        <fullName evidence="8">23S rRNA pseudouridine(2604) synthase</fullName>
    </alternativeName>
    <alternativeName>
        <fullName evidence="7">Ribosomal large subunit pseudouridine synthase F</fullName>
    </alternativeName>
    <alternativeName>
        <fullName evidence="7">rRNA pseudouridylate synthase F</fullName>
    </alternativeName>
    <alternativeName>
        <fullName evidence="7">rRNA-uridine isomerase F</fullName>
    </alternativeName>
    <alternativeName>
        <fullName evidence="7">tRNA(Tyr) pseudouridine(35) synthase</fullName>
    </alternativeName>
</protein>
<keyword id="KW-0002">3D-structure</keyword>
<keyword id="KW-0903">Direct protein sequencing</keyword>
<keyword id="KW-0413">Isomerase</keyword>
<keyword id="KW-1185">Reference proteome</keyword>
<keyword id="KW-0698">rRNA processing</keyword>
<keyword id="KW-0819">tRNA processing</keyword>
<accession>P32684</accession>
<accession>Q2M6T2</accession>
<evidence type="ECO:0000255" key="1">
    <source>
        <dbReference type="PROSITE-ProRule" id="PRU00182"/>
    </source>
</evidence>
<evidence type="ECO:0000256" key="2">
    <source>
        <dbReference type="SAM" id="MobiDB-lite"/>
    </source>
</evidence>
<evidence type="ECO:0000269" key="3">
    <source>
    </source>
</evidence>
<evidence type="ECO:0000269" key="4">
    <source>
    </source>
</evidence>
<evidence type="ECO:0000269" key="5">
    <source>
    </source>
</evidence>
<evidence type="ECO:0000269" key="6">
    <source>
    </source>
</evidence>
<evidence type="ECO:0000305" key="7"/>
<evidence type="ECO:0000305" key="8">
    <source>
    </source>
</evidence>
<evidence type="ECO:0000305" key="9">
    <source>
    </source>
</evidence>
<evidence type="ECO:0007744" key="10">
    <source>
        <dbReference type="PDB" id="2GML"/>
    </source>
</evidence>
<evidence type="ECO:0007744" key="11">
    <source>
        <dbReference type="PDB" id="3DH3"/>
    </source>
</evidence>
<evidence type="ECO:0007829" key="12">
    <source>
        <dbReference type="PDB" id="2GML"/>
    </source>
</evidence>
<evidence type="ECO:0007829" key="13">
    <source>
        <dbReference type="PDB" id="3DH3"/>
    </source>
</evidence>
<comment type="function">
    <text evidence="3 6">Dual specificity enzyme that catalyzes the synthesis of pseudouridine from uracil-2604 in 23S ribosomal RNA and from uracil-35 in the anticodon of tRNA(Tyr) (PubMed:11720289, PubMed:27551044). Can, to a small extent, also react with uracil-2605 (PubMed:11720289).</text>
</comment>
<comment type="catalytic activity">
    <reaction evidence="3 5 6">
        <text>uridine(2604) in 23S rRNA = pseudouridine(2604) in 23S rRNA</text>
        <dbReference type="Rhea" id="RHEA:38875"/>
        <dbReference type="Rhea" id="RHEA-COMP:10093"/>
        <dbReference type="Rhea" id="RHEA-COMP:10094"/>
        <dbReference type="ChEBI" id="CHEBI:65314"/>
        <dbReference type="ChEBI" id="CHEBI:65315"/>
        <dbReference type="EC" id="5.4.99.21"/>
    </reaction>
</comment>
<comment type="catalytic activity">
    <reaction evidence="6">
        <text>uridine(35) in tRNA(Tyr) = pseudouridine(35) in tRNA(Tyr)</text>
        <dbReference type="Rhea" id="RHEA:60556"/>
        <dbReference type="Rhea" id="RHEA-COMP:15607"/>
        <dbReference type="Rhea" id="RHEA-COMP:15608"/>
        <dbReference type="ChEBI" id="CHEBI:65314"/>
        <dbReference type="ChEBI" id="CHEBI:65315"/>
    </reaction>
</comment>
<comment type="subunit">
    <text evidence="4 5">Monomer.</text>
</comment>
<comment type="similarity">
    <text evidence="7">Belongs to the pseudouridine synthase RsuA family.</text>
</comment>
<proteinExistence type="evidence at protein level"/>
<name>RLUF_ECOLI</name>
<dbReference type="EC" id="5.4.99.-" evidence="6"/>
<dbReference type="EC" id="5.4.99.21" evidence="3 5 6"/>
<dbReference type="EMBL" id="U00006">
    <property type="protein sequence ID" value="AAC43116.1"/>
    <property type="molecule type" value="Genomic_DNA"/>
</dbReference>
<dbReference type="EMBL" id="U00096">
    <property type="protein sequence ID" value="AAC76992.1"/>
    <property type="molecule type" value="Genomic_DNA"/>
</dbReference>
<dbReference type="EMBL" id="AP009048">
    <property type="protein sequence ID" value="BAE78024.1"/>
    <property type="molecule type" value="Genomic_DNA"/>
</dbReference>
<dbReference type="PIR" id="E65209">
    <property type="entry name" value="E65209"/>
</dbReference>
<dbReference type="RefSeq" id="NP_418446.1">
    <property type="nucleotide sequence ID" value="NC_000913.3"/>
</dbReference>
<dbReference type="RefSeq" id="WP_000936377.1">
    <property type="nucleotide sequence ID" value="NZ_SSZK01000049.1"/>
</dbReference>
<dbReference type="PDB" id="2GML">
    <property type="method" value="X-ray"/>
    <property type="resolution" value="2.60 A"/>
    <property type="chains" value="A/B=66-290"/>
</dbReference>
<dbReference type="PDB" id="3DH3">
    <property type="method" value="X-ray"/>
    <property type="resolution" value="3.00 A"/>
    <property type="chains" value="A/B/C/D=1-290"/>
</dbReference>
<dbReference type="PDBsum" id="2GML"/>
<dbReference type="PDBsum" id="3DH3"/>
<dbReference type="SMR" id="P32684"/>
<dbReference type="BioGRID" id="4261777">
    <property type="interactions" value="68"/>
</dbReference>
<dbReference type="FunCoup" id="P32684">
    <property type="interactions" value="37"/>
</dbReference>
<dbReference type="IntAct" id="P32684">
    <property type="interactions" value="9"/>
</dbReference>
<dbReference type="STRING" id="511145.b4022"/>
<dbReference type="jPOST" id="P32684"/>
<dbReference type="PaxDb" id="511145-b4022"/>
<dbReference type="EnsemblBacteria" id="AAC76992">
    <property type="protein sequence ID" value="AAC76992"/>
    <property type="gene ID" value="b4022"/>
</dbReference>
<dbReference type="GeneID" id="948519"/>
<dbReference type="KEGG" id="ecj:JW3982"/>
<dbReference type="KEGG" id="eco:b4022"/>
<dbReference type="KEGG" id="ecoc:C3026_21725"/>
<dbReference type="PATRIC" id="fig|1411691.4.peg.2691"/>
<dbReference type="EchoBASE" id="EB1865"/>
<dbReference type="eggNOG" id="COG1187">
    <property type="taxonomic scope" value="Bacteria"/>
</dbReference>
<dbReference type="HOGENOM" id="CLU_024979_6_1_6"/>
<dbReference type="InParanoid" id="P32684"/>
<dbReference type="OMA" id="SMEFAPF"/>
<dbReference type="OrthoDB" id="9807213at2"/>
<dbReference type="PhylomeDB" id="P32684"/>
<dbReference type="BioCyc" id="EcoCyc:EG11921-MONOMER"/>
<dbReference type="BioCyc" id="MetaCyc:EG11921-MONOMER"/>
<dbReference type="BRENDA" id="5.4.99.21">
    <property type="organism ID" value="2026"/>
</dbReference>
<dbReference type="EvolutionaryTrace" id="P32684"/>
<dbReference type="PRO" id="PR:P32684"/>
<dbReference type="Proteomes" id="UP000000625">
    <property type="component" value="Chromosome"/>
</dbReference>
<dbReference type="GO" id="GO:0160138">
    <property type="term" value="F:23S rRNA pseudouridine(2604) synthase activity"/>
    <property type="evidence" value="ECO:0007669"/>
    <property type="project" value="UniProtKB-EC"/>
</dbReference>
<dbReference type="GO" id="GO:0009982">
    <property type="term" value="F:pseudouridine synthase activity"/>
    <property type="evidence" value="ECO:0000314"/>
    <property type="project" value="EcoCyc"/>
</dbReference>
<dbReference type="GO" id="GO:0003723">
    <property type="term" value="F:RNA binding"/>
    <property type="evidence" value="ECO:0007669"/>
    <property type="project" value="InterPro"/>
</dbReference>
<dbReference type="GO" id="GO:0120159">
    <property type="term" value="F:rRNA pseudouridine synthase activity"/>
    <property type="evidence" value="ECO:0000314"/>
    <property type="project" value="EcoCyc"/>
</dbReference>
<dbReference type="GO" id="GO:0106029">
    <property type="term" value="F:tRNA pseudouridine synthase activity"/>
    <property type="evidence" value="ECO:0000314"/>
    <property type="project" value="EcoCyc"/>
</dbReference>
<dbReference type="GO" id="GO:0000455">
    <property type="term" value="P:enzyme-directed rRNA pseudouridine synthesis"/>
    <property type="evidence" value="ECO:0000315"/>
    <property type="project" value="EcoCyc"/>
</dbReference>
<dbReference type="GO" id="GO:0031119">
    <property type="term" value="P:tRNA pseudouridine synthesis"/>
    <property type="evidence" value="ECO:0000315"/>
    <property type="project" value="EcoCyc"/>
</dbReference>
<dbReference type="CDD" id="cd02554">
    <property type="entry name" value="PseudoU_synth_RluF"/>
    <property type="match status" value="1"/>
</dbReference>
<dbReference type="CDD" id="cd00165">
    <property type="entry name" value="S4"/>
    <property type="match status" value="1"/>
</dbReference>
<dbReference type="DisProt" id="DP02011"/>
<dbReference type="FunFam" id="3.10.290.10:FF:000003">
    <property type="entry name" value="Pseudouridine synthase"/>
    <property type="match status" value="1"/>
</dbReference>
<dbReference type="FunFam" id="3.30.70.1560:FF:000002">
    <property type="entry name" value="Pseudouridine synthase"/>
    <property type="match status" value="1"/>
</dbReference>
<dbReference type="Gene3D" id="3.30.70.1560">
    <property type="entry name" value="Alpha-L RNA-binding motif"/>
    <property type="match status" value="1"/>
</dbReference>
<dbReference type="Gene3D" id="3.30.70.580">
    <property type="entry name" value="Pseudouridine synthase I, catalytic domain, N-terminal subdomain"/>
    <property type="match status" value="1"/>
</dbReference>
<dbReference type="Gene3D" id="3.10.290.10">
    <property type="entry name" value="RNA-binding S4 domain"/>
    <property type="match status" value="1"/>
</dbReference>
<dbReference type="InterPro" id="IPR042092">
    <property type="entry name" value="PsdUridine_s_RsuA/RluB/E/F_cat"/>
</dbReference>
<dbReference type="InterPro" id="IPR020103">
    <property type="entry name" value="PsdUridine_synth_cat_dom_sf"/>
</dbReference>
<dbReference type="InterPro" id="IPR006145">
    <property type="entry name" value="PsdUridine_synth_RsuA/RluA"/>
</dbReference>
<dbReference type="InterPro" id="IPR000748">
    <property type="entry name" value="PsdUridine_synth_RsuA/RluB/E/F"/>
</dbReference>
<dbReference type="InterPro" id="IPR018496">
    <property type="entry name" value="PsdUridine_synth_RsuA/RluB_CS"/>
</dbReference>
<dbReference type="InterPro" id="IPR050343">
    <property type="entry name" value="RsuA_PseudoU_synthase"/>
</dbReference>
<dbReference type="InterPro" id="IPR002942">
    <property type="entry name" value="S4_RNA-bd"/>
</dbReference>
<dbReference type="InterPro" id="IPR036986">
    <property type="entry name" value="S4_RNA-bd_sf"/>
</dbReference>
<dbReference type="InterPro" id="IPR020094">
    <property type="entry name" value="TruA/RsuA/RluB/E/F_N"/>
</dbReference>
<dbReference type="NCBIfam" id="NF007784">
    <property type="entry name" value="PRK10475.1"/>
    <property type="match status" value="1"/>
</dbReference>
<dbReference type="NCBIfam" id="TIGR00093">
    <property type="entry name" value="pseudouridine synthase"/>
    <property type="match status" value="1"/>
</dbReference>
<dbReference type="PANTHER" id="PTHR47683">
    <property type="entry name" value="PSEUDOURIDINE SYNTHASE FAMILY PROTEIN-RELATED"/>
    <property type="match status" value="1"/>
</dbReference>
<dbReference type="PANTHER" id="PTHR47683:SF2">
    <property type="entry name" value="RNA-BINDING S4 DOMAIN-CONTAINING PROTEIN"/>
    <property type="match status" value="1"/>
</dbReference>
<dbReference type="Pfam" id="PF00849">
    <property type="entry name" value="PseudoU_synth_2"/>
    <property type="match status" value="1"/>
</dbReference>
<dbReference type="Pfam" id="PF01479">
    <property type="entry name" value="S4"/>
    <property type="match status" value="1"/>
</dbReference>
<dbReference type="SMART" id="SM00363">
    <property type="entry name" value="S4"/>
    <property type="match status" value="1"/>
</dbReference>
<dbReference type="SUPFAM" id="SSF55174">
    <property type="entry name" value="Alpha-L RNA-binding motif"/>
    <property type="match status" value="1"/>
</dbReference>
<dbReference type="SUPFAM" id="SSF55120">
    <property type="entry name" value="Pseudouridine synthase"/>
    <property type="match status" value="1"/>
</dbReference>
<dbReference type="PROSITE" id="PS01149">
    <property type="entry name" value="PSI_RSU"/>
    <property type="match status" value="1"/>
</dbReference>
<dbReference type="PROSITE" id="PS50889">
    <property type="entry name" value="S4"/>
    <property type="match status" value="1"/>
</dbReference>
<feature type="chain" id="PRO_0000100016" description="Dual-specificity RNA pseudouridine synthase RluF">
    <location>
        <begin position="1"/>
        <end position="290"/>
    </location>
</feature>
<feature type="domain" description="S4 RNA-binding" evidence="1">
    <location>
        <begin position="7"/>
        <end position="72"/>
    </location>
</feature>
<feature type="region of interest" description="Interaction with RNA" evidence="5">
    <location>
        <begin position="105"/>
        <end position="108"/>
    </location>
</feature>
<feature type="region of interest" description="Interaction with RNA" evidence="5">
    <location>
        <begin position="187"/>
        <end position="190"/>
    </location>
</feature>
<feature type="region of interest" description="Disordered" evidence="2">
    <location>
        <begin position="243"/>
        <end position="290"/>
    </location>
</feature>
<feature type="compositionally biased region" description="Basic and acidic residues" evidence="2">
    <location>
        <begin position="261"/>
        <end position="271"/>
    </location>
</feature>
<feature type="active site" description="Nucleophile" evidence="9">
    <location>
        <position position="107"/>
    </location>
</feature>
<feature type="mutagenesis site" description="Loss of activity." evidence="3">
    <original>D</original>
    <variation>N</variation>
    <variation>T</variation>
    <location>
        <position position="107"/>
    </location>
</feature>
<feature type="helix" evidence="13">
    <location>
        <begin position="9"/>
        <end position="14"/>
    </location>
</feature>
<feature type="turn" evidence="13">
    <location>
        <begin position="15"/>
        <end position="17"/>
    </location>
</feature>
<feature type="helix" evidence="13">
    <location>
        <begin position="21"/>
        <end position="29"/>
    </location>
</feature>
<feature type="strand" evidence="13">
    <location>
        <begin position="33"/>
        <end position="35"/>
    </location>
</feature>
<feature type="strand" evidence="13">
    <location>
        <begin position="52"/>
        <end position="54"/>
    </location>
</feature>
<feature type="strand" evidence="13">
    <location>
        <begin position="57"/>
        <end position="59"/>
    </location>
</feature>
<feature type="helix" evidence="13">
    <location>
        <begin position="64"/>
        <end position="66"/>
    </location>
</feature>
<feature type="strand" evidence="12">
    <location>
        <begin position="69"/>
        <end position="74"/>
    </location>
</feature>
<feature type="strand" evidence="12">
    <location>
        <begin position="82"/>
        <end position="85"/>
    </location>
</feature>
<feature type="strand" evidence="12">
    <location>
        <begin position="87"/>
        <end position="89"/>
    </location>
</feature>
<feature type="helix" evidence="12">
    <location>
        <begin position="90"/>
        <end position="93"/>
    </location>
</feature>
<feature type="strand" evidence="12">
    <location>
        <begin position="101"/>
        <end position="104"/>
    </location>
</feature>
<feature type="strand" evidence="12">
    <location>
        <begin position="111"/>
        <end position="118"/>
    </location>
</feature>
<feature type="helix" evidence="12">
    <location>
        <begin position="120"/>
        <end position="132"/>
    </location>
</feature>
<feature type="strand" evidence="12">
    <location>
        <begin position="135"/>
        <end position="143"/>
    </location>
</feature>
<feature type="helix" evidence="12">
    <location>
        <begin position="147"/>
        <end position="153"/>
    </location>
</feature>
<feature type="strand" evidence="13">
    <location>
        <begin position="160"/>
        <end position="163"/>
    </location>
</feature>
<feature type="strand" evidence="12">
    <location>
        <begin position="168"/>
        <end position="173"/>
    </location>
</feature>
<feature type="strand" evidence="12">
    <location>
        <begin position="176"/>
        <end position="181"/>
    </location>
</feature>
<feature type="helix" evidence="12">
    <location>
        <begin position="188"/>
        <end position="195"/>
    </location>
</feature>
<feature type="strand" evidence="12">
    <location>
        <begin position="200"/>
        <end position="208"/>
    </location>
</feature>
<feature type="strand" evidence="12">
    <location>
        <begin position="221"/>
        <end position="223"/>
    </location>
</feature>
<feature type="helix" evidence="12">
    <location>
        <begin position="226"/>
        <end position="233"/>
    </location>
</feature>
<reference key="1">
    <citation type="journal article" date="1993" name="Nucleic Acids Res.">
        <title>Analysis of the Escherichia coli genome. IV. DNA sequence of the region from 89.2 to 92.8 minutes.</title>
        <authorList>
            <person name="Blattner F.R."/>
            <person name="Burland V.D."/>
            <person name="Plunkett G. III"/>
            <person name="Sofia H.J."/>
            <person name="Daniels D.L."/>
        </authorList>
    </citation>
    <scope>NUCLEOTIDE SEQUENCE [LARGE SCALE GENOMIC DNA]</scope>
    <source>
        <strain>K12 / MG1655 / ATCC 47076</strain>
    </source>
</reference>
<reference key="2">
    <citation type="journal article" date="1997" name="Science">
        <title>The complete genome sequence of Escherichia coli K-12.</title>
        <authorList>
            <person name="Blattner F.R."/>
            <person name="Plunkett G. III"/>
            <person name="Bloch C.A."/>
            <person name="Perna N.T."/>
            <person name="Burland V."/>
            <person name="Riley M."/>
            <person name="Collado-Vides J."/>
            <person name="Glasner J.D."/>
            <person name="Rode C.K."/>
            <person name="Mayhew G.F."/>
            <person name="Gregor J."/>
            <person name="Davis N.W."/>
            <person name="Kirkpatrick H.A."/>
            <person name="Goeden M.A."/>
            <person name="Rose D.J."/>
            <person name="Mau B."/>
            <person name="Shao Y."/>
        </authorList>
    </citation>
    <scope>NUCLEOTIDE SEQUENCE [LARGE SCALE GENOMIC DNA]</scope>
    <source>
        <strain>K12 / MG1655 / ATCC 47076</strain>
    </source>
</reference>
<reference key="3">
    <citation type="journal article" date="2006" name="Mol. Syst. Biol.">
        <title>Highly accurate genome sequences of Escherichia coli K-12 strains MG1655 and W3110.</title>
        <authorList>
            <person name="Hayashi K."/>
            <person name="Morooka N."/>
            <person name="Yamamoto Y."/>
            <person name="Fujita K."/>
            <person name="Isono K."/>
            <person name="Choi S."/>
            <person name="Ohtsubo E."/>
            <person name="Baba T."/>
            <person name="Wanner B.L."/>
            <person name="Mori H."/>
            <person name="Horiuchi T."/>
        </authorList>
    </citation>
    <scope>NUCLEOTIDE SEQUENCE [LARGE SCALE GENOMIC DNA]</scope>
    <source>
        <strain>K12 / W3110 / ATCC 27325 / DSM 5911</strain>
    </source>
</reference>
<reference key="4">
    <citation type="journal article" date="2001" name="RNA">
        <title>Identification and site of action of the remaining four putative pseudouridine synthases in Escherichia coli.</title>
        <authorList>
            <person name="Del Campo M."/>
            <person name="Kaya Y."/>
            <person name="Ofengand J."/>
        </authorList>
    </citation>
    <scope>FUNCTION</scope>
    <scope>CATALYTIC ACTIVITY</scope>
    <scope>MUTAGENESIS OF ASP-107</scope>
    <source>
        <strain>K12 / MG1655 / ATCC 47076</strain>
    </source>
</reference>
<reference key="5">
    <citation type="journal article" date="2016" name="J. Biol. Chem.">
        <title>Pseudouridine in the anticodon of Escherichia coli tRNATyr(QPsiA) is catalyzed by the dual specificity enzyme RluF.</title>
        <authorList>
            <person name="Addepalli B."/>
            <person name="Limbach P.A."/>
        </authorList>
    </citation>
    <scope>FUNCTION</scope>
    <scope>CATALYTIC ACTIVITY</scope>
</reference>
<reference evidence="10" key="6">
    <citation type="journal article" date="2006" name="J. Mol. Biol.">
        <title>Domain organization and crystal structure of the catalytic domain of E.coli RluF, a pseudouridine synthase that acts on 23S rRNA.</title>
        <authorList>
            <person name="Sunita S."/>
            <person name="Zhenxing H."/>
            <person name="Swaathi J."/>
            <person name="Cygler M."/>
            <person name="Matte A."/>
            <person name="Sivaraman J."/>
        </authorList>
    </citation>
    <scope>X-RAY CRYSTALLOGRAPHY (2.6 ANGSTROMS) OF 66-290</scope>
    <scope>PARTIAL PROTEIN SEQUENCE</scope>
    <scope>SUBUNIT</scope>
    <scope>IDENTIFICATION BY MASS SPECTROMETRY</scope>
</reference>
<reference evidence="11" key="7">
    <citation type="journal article" date="2009" name="J. Mol. Biol.">
        <title>Crystal structure of an RluF-RNA complex: a base-pair rearrangement is the key to selectivity of RluF for U2604 of the ribosome.</title>
        <authorList>
            <person name="Alian A."/>
            <person name="DeGiovanni A."/>
            <person name="Griner S.L."/>
            <person name="Finer-Moore J.S."/>
            <person name="Stroud R.M."/>
        </authorList>
    </citation>
    <scope>X-RAY CRYSTALLOGRAPHY (3.0 ANGSTROMS) IN COMPLEX WITH SUBSTRATE RNA</scope>
    <scope>CATALYTIC ACTIVITY</scope>
    <scope>ACTIVE SITE</scope>
</reference>
<sequence>MLPDSSVRLNKYISESGICSRREADRYIEQGNVFLNGKRATIGDQVKPGDVVKVNGQLIEPREAEDLVLIALNKPVGIVSTTEDGERDNIVDFVNHSKRVFPIGRLDKDSQGLIFLTNHGDLVNKILRAGNDHEKEYLVTVDKPITEEFIRGMSAGVPILGTVTKKCKVKKEAPFVFRITLVQGLNRQIRRMCEHFGYEVKKLERTRIMNVSLSGIPLGEWRDLTDDELIDLFKLIENSSSEVKPKAKAKPKTAGIKRPVVKMEKTAEKGGRPASNGKRFTSPGRKKKGR</sequence>
<gene>
    <name type="primary">rluF</name>
    <name type="synonym">yjbC</name>
    <name type="ordered locus">b4022</name>
    <name type="ordered locus">JW3982</name>
</gene>
<organism>
    <name type="scientific">Escherichia coli (strain K12)</name>
    <dbReference type="NCBI Taxonomy" id="83333"/>
    <lineage>
        <taxon>Bacteria</taxon>
        <taxon>Pseudomonadati</taxon>
        <taxon>Pseudomonadota</taxon>
        <taxon>Gammaproteobacteria</taxon>
        <taxon>Enterobacterales</taxon>
        <taxon>Enterobacteriaceae</taxon>
        <taxon>Escherichia</taxon>
    </lineage>
</organism>